<accession>Q81YV0</accession>
<accession>Q6I3Q1</accession>
<accession>Q6KXG4</accession>
<gene>
    <name evidence="1" type="primary">hemL1</name>
    <name type="ordered locus">BA_0531</name>
    <name type="ordered locus">GBAA_0531</name>
    <name type="ordered locus">BAS0499</name>
</gene>
<protein>
    <recommendedName>
        <fullName evidence="1">Glutamate-1-semialdehyde 2,1-aminomutase 1</fullName>
        <shortName evidence="1">GSA 1</shortName>
        <ecNumber evidence="1">5.4.3.8</ecNumber>
    </recommendedName>
    <alternativeName>
        <fullName evidence="1">Glutamate-1-semialdehyde aminotransferase 1</fullName>
        <shortName evidence="1">GSA-AT 1</shortName>
    </alternativeName>
</protein>
<reference key="1">
    <citation type="journal article" date="2003" name="Nature">
        <title>The genome sequence of Bacillus anthracis Ames and comparison to closely related bacteria.</title>
        <authorList>
            <person name="Read T.D."/>
            <person name="Peterson S.N."/>
            <person name="Tourasse N.J."/>
            <person name="Baillie L.W."/>
            <person name="Paulsen I.T."/>
            <person name="Nelson K.E."/>
            <person name="Tettelin H."/>
            <person name="Fouts D.E."/>
            <person name="Eisen J.A."/>
            <person name="Gill S.R."/>
            <person name="Holtzapple E.K."/>
            <person name="Okstad O.A."/>
            <person name="Helgason E."/>
            <person name="Rilstone J."/>
            <person name="Wu M."/>
            <person name="Kolonay J.F."/>
            <person name="Beanan M.J."/>
            <person name="Dodson R.J."/>
            <person name="Brinkac L.M."/>
            <person name="Gwinn M.L."/>
            <person name="DeBoy R.T."/>
            <person name="Madpu R."/>
            <person name="Daugherty S.C."/>
            <person name="Durkin A.S."/>
            <person name="Haft D.H."/>
            <person name="Nelson W.C."/>
            <person name="Peterson J.D."/>
            <person name="Pop M."/>
            <person name="Khouri H.M."/>
            <person name="Radune D."/>
            <person name="Benton J.L."/>
            <person name="Mahamoud Y."/>
            <person name="Jiang L."/>
            <person name="Hance I.R."/>
            <person name="Weidman J.F."/>
            <person name="Berry K.J."/>
            <person name="Plaut R.D."/>
            <person name="Wolf A.M."/>
            <person name="Watkins K.L."/>
            <person name="Nierman W.C."/>
            <person name="Hazen A."/>
            <person name="Cline R.T."/>
            <person name="Redmond C."/>
            <person name="Thwaite J.E."/>
            <person name="White O."/>
            <person name="Salzberg S.L."/>
            <person name="Thomason B."/>
            <person name="Friedlander A.M."/>
            <person name="Koehler T.M."/>
            <person name="Hanna P.C."/>
            <person name="Kolstoe A.-B."/>
            <person name="Fraser C.M."/>
        </authorList>
    </citation>
    <scope>NUCLEOTIDE SEQUENCE [LARGE SCALE GENOMIC DNA]</scope>
    <source>
        <strain>Ames / isolate Porton</strain>
    </source>
</reference>
<reference key="2">
    <citation type="submission" date="2004-01" db="EMBL/GenBank/DDBJ databases">
        <title>Complete genome sequence of Bacillus anthracis Sterne.</title>
        <authorList>
            <person name="Brettin T.S."/>
            <person name="Bruce D."/>
            <person name="Challacombe J.F."/>
            <person name="Gilna P."/>
            <person name="Han C."/>
            <person name="Hill K."/>
            <person name="Hitchcock P."/>
            <person name="Jackson P."/>
            <person name="Keim P."/>
            <person name="Longmire J."/>
            <person name="Lucas S."/>
            <person name="Okinaka R."/>
            <person name="Richardson P."/>
            <person name="Rubin E."/>
            <person name="Tice H."/>
        </authorList>
    </citation>
    <scope>NUCLEOTIDE SEQUENCE [LARGE SCALE GENOMIC DNA]</scope>
    <source>
        <strain>Sterne</strain>
    </source>
</reference>
<reference key="3">
    <citation type="journal article" date="2009" name="J. Bacteriol.">
        <title>The complete genome sequence of Bacillus anthracis Ames 'Ancestor'.</title>
        <authorList>
            <person name="Ravel J."/>
            <person name="Jiang L."/>
            <person name="Stanley S.T."/>
            <person name="Wilson M.R."/>
            <person name="Decker R.S."/>
            <person name="Read T.D."/>
            <person name="Worsham P."/>
            <person name="Keim P.S."/>
            <person name="Salzberg S.L."/>
            <person name="Fraser-Liggett C.M."/>
            <person name="Rasko D.A."/>
        </authorList>
    </citation>
    <scope>NUCLEOTIDE SEQUENCE [LARGE SCALE GENOMIC DNA]</scope>
    <source>
        <strain>Ames ancestor</strain>
    </source>
</reference>
<keyword id="KW-0002">3D-structure</keyword>
<keyword id="KW-0963">Cytoplasm</keyword>
<keyword id="KW-0413">Isomerase</keyword>
<keyword id="KW-0627">Porphyrin biosynthesis</keyword>
<keyword id="KW-0663">Pyridoxal phosphate</keyword>
<keyword id="KW-1185">Reference proteome</keyword>
<feature type="chain" id="PRO_0000243536" description="Glutamate-1-semialdehyde 2,1-aminomutase 1">
    <location>
        <begin position="1"/>
        <end position="434"/>
    </location>
</feature>
<feature type="modified residue" description="N6-(pyridoxal phosphate)lysine" evidence="1">
    <location>
        <position position="270"/>
    </location>
</feature>
<feature type="helix" evidence="2">
    <location>
        <begin position="6"/>
        <end position="18"/>
    </location>
</feature>
<feature type="helix" evidence="2">
    <location>
        <begin position="20"/>
        <end position="22"/>
    </location>
</feature>
<feature type="helix" evidence="2">
    <location>
        <begin position="26"/>
        <end position="28"/>
    </location>
</feature>
<feature type="helix" evidence="2">
    <location>
        <begin position="31"/>
        <end position="33"/>
    </location>
</feature>
<feature type="strand" evidence="2">
    <location>
        <begin position="41"/>
        <end position="46"/>
    </location>
</feature>
<feature type="strand" evidence="2">
    <location>
        <begin position="48"/>
        <end position="51"/>
    </location>
</feature>
<feature type="strand" evidence="2">
    <location>
        <begin position="56"/>
        <end position="59"/>
    </location>
</feature>
<feature type="helix" evidence="2">
    <location>
        <begin position="62"/>
        <end position="64"/>
    </location>
</feature>
<feature type="helix" evidence="2">
    <location>
        <begin position="74"/>
        <end position="86"/>
    </location>
</feature>
<feature type="helix" evidence="2">
    <location>
        <begin position="95"/>
        <end position="107"/>
    </location>
</feature>
<feature type="strand" evidence="2">
    <location>
        <begin position="112"/>
        <end position="119"/>
    </location>
</feature>
<feature type="helix" evidence="2">
    <location>
        <begin position="120"/>
        <end position="135"/>
    </location>
</feature>
<feature type="strand" evidence="2">
    <location>
        <begin position="139"/>
        <end position="143"/>
    </location>
</feature>
<feature type="helix" evidence="2">
    <location>
        <begin position="152"/>
        <end position="155"/>
    </location>
</feature>
<feature type="strand" evidence="2">
    <location>
        <begin position="167"/>
        <end position="170"/>
    </location>
</feature>
<feature type="helix" evidence="2">
    <location>
        <begin position="175"/>
        <end position="178"/>
    </location>
</feature>
<feature type="strand" evidence="2">
    <location>
        <begin position="181"/>
        <end position="184"/>
    </location>
</feature>
<feature type="helix" evidence="2">
    <location>
        <begin position="189"/>
        <end position="199"/>
    </location>
</feature>
<feature type="helix" evidence="2">
    <location>
        <begin position="200"/>
        <end position="202"/>
    </location>
</feature>
<feature type="strand" evidence="2">
    <location>
        <begin position="203"/>
        <end position="208"/>
    </location>
</feature>
<feature type="strand" evidence="2">
    <location>
        <begin position="210"/>
        <end position="212"/>
    </location>
</feature>
<feature type="helix" evidence="2">
    <location>
        <begin position="224"/>
        <end position="233"/>
    </location>
</feature>
<feature type="turn" evidence="2">
    <location>
        <begin position="234"/>
        <end position="236"/>
    </location>
</feature>
<feature type="strand" evidence="2">
    <location>
        <begin position="238"/>
        <end position="242"/>
    </location>
</feature>
<feature type="turn" evidence="2">
    <location>
        <begin position="244"/>
        <end position="249"/>
    </location>
</feature>
<feature type="strand" evidence="2">
    <location>
        <begin position="250"/>
        <end position="253"/>
    </location>
</feature>
<feature type="helix" evidence="2">
    <location>
        <begin position="255"/>
        <end position="259"/>
    </location>
</feature>
<feature type="strand" evidence="2">
    <location>
        <begin position="264"/>
        <end position="268"/>
    </location>
</feature>
<feature type="turn" evidence="2">
    <location>
        <begin position="272"/>
        <end position="275"/>
    </location>
</feature>
<feature type="strand" evidence="2">
    <location>
        <begin position="279"/>
        <end position="283"/>
    </location>
</feature>
<feature type="helix" evidence="2">
    <location>
        <begin position="285"/>
        <end position="288"/>
    </location>
</feature>
<feature type="turn" evidence="2">
    <location>
        <begin position="292"/>
        <end position="294"/>
    </location>
</feature>
<feature type="strand" evidence="2">
    <location>
        <begin position="295"/>
        <end position="297"/>
    </location>
</feature>
<feature type="turn" evidence="2">
    <location>
        <begin position="302"/>
        <end position="305"/>
    </location>
</feature>
<feature type="helix" evidence="2">
    <location>
        <begin position="307"/>
        <end position="320"/>
    </location>
</feature>
<feature type="helix" evidence="2">
    <location>
        <begin position="325"/>
        <end position="346"/>
    </location>
</feature>
<feature type="strand" evidence="2">
    <location>
        <begin position="351"/>
        <end position="356"/>
    </location>
</feature>
<feature type="strand" evidence="2">
    <location>
        <begin position="359"/>
        <end position="367"/>
    </location>
</feature>
<feature type="helix" evidence="2">
    <location>
        <begin position="372"/>
        <end position="377"/>
    </location>
</feature>
<feature type="helix" evidence="2">
    <location>
        <begin position="380"/>
        <end position="392"/>
    </location>
</feature>
<feature type="helix" evidence="2">
    <location>
        <begin position="413"/>
        <end position="432"/>
    </location>
</feature>
<organism>
    <name type="scientific">Bacillus anthracis</name>
    <dbReference type="NCBI Taxonomy" id="1392"/>
    <lineage>
        <taxon>Bacteria</taxon>
        <taxon>Bacillati</taxon>
        <taxon>Bacillota</taxon>
        <taxon>Bacilli</taxon>
        <taxon>Bacillales</taxon>
        <taxon>Bacillaceae</taxon>
        <taxon>Bacillus</taxon>
        <taxon>Bacillus cereus group</taxon>
    </lineage>
</organism>
<proteinExistence type="evidence at protein level"/>
<dbReference type="EC" id="5.4.3.8" evidence="1"/>
<dbReference type="EMBL" id="AE016879">
    <property type="protein sequence ID" value="AAP24552.1"/>
    <property type="molecule type" value="Genomic_DNA"/>
</dbReference>
<dbReference type="EMBL" id="AE017225">
    <property type="protein sequence ID" value="AAT52830.1"/>
    <property type="molecule type" value="Genomic_DNA"/>
</dbReference>
<dbReference type="EMBL" id="AE017334">
    <property type="protein sequence ID" value="AAT29625.1"/>
    <property type="molecule type" value="Genomic_DNA"/>
</dbReference>
<dbReference type="RefSeq" id="NP_843066.1">
    <property type="nucleotide sequence ID" value="NC_003997.3"/>
</dbReference>
<dbReference type="RefSeq" id="YP_026779.1">
    <property type="nucleotide sequence ID" value="NC_005945.1"/>
</dbReference>
<dbReference type="PDB" id="3L44">
    <property type="method" value="X-ray"/>
    <property type="resolution" value="2.05 A"/>
    <property type="chains" value="A/B=1-434"/>
</dbReference>
<dbReference type="PDBsum" id="3L44"/>
<dbReference type="SMR" id="Q81YV0"/>
<dbReference type="IntAct" id="Q81YV0">
    <property type="interactions" value="4"/>
</dbReference>
<dbReference type="STRING" id="261594.GBAA_0531"/>
<dbReference type="DNASU" id="1087796"/>
<dbReference type="GeneID" id="45020579"/>
<dbReference type="KEGG" id="ban:BA_0531"/>
<dbReference type="KEGG" id="bar:GBAA_0531"/>
<dbReference type="KEGG" id="bat:BAS0499"/>
<dbReference type="PATRIC" id="fig|198094.11.peg.530"/>
<dbReference type="eggNOG" id="COG0001">
    <property type="taxonomic scope" value="Bacteria"/>
</dbReference>
<dbReference type="HOGENOM" id="CLU_016922_1_5_9"/>
<dbReference type="OMA" id="NFGMVEP"/>
<dbReference type="OrthoDB" id="9807885at2"/>
<dbReference type="UniPathway" id="UPA00251">
    <property type="reaction ID" value="UER00317"/>
</dbReference>
<dbReference type="EvolutionaryTrace" id="Q81YV0"/>
<dbReference type="Proteomes" id="UP000000427">
    <property type="component" value="Chromosome"/>
</dbReference>
<dbReference type="Proteomes" id="UP000000594">
    <property type="component" value="Chromosome"/>
</dbReference>
<dbReference type="GO" id="GO:0005737">
    <property type="term" value="C:cytoplasm"/>
    <property type="evidence" value="ECO:0007669"/>
    <property type="project" value="UniProtKB-SubCell"/>
</dbReference>
<dbReference type="GO" id="GO:0042286">
    <property type="term" value="F:glutamate-1-semialdehyde 2,1-aminomutase activity"/>
    <property type="evidence" value="ECO:0007669"/>
    <property type="project" value="UniProtKB-UniRule"/>
</dbReference>
<dbReference type="GO" id="GO:0030170">
    <property type="term" value="F:pyridoxal phosphate binding"/>
    <property type="evidence" value="ECO:0007669"/>
    <property type="project" value="InterPro"/>
</dbReference>
<dbReference type="GO" id="GO:0008483">
    <property type="term" value="F:transaminase activity"/>
    <property type="evidence" value="ECO:0007669"/>
    <property type="project" value="InterPro"/>
</dbReference>
<dbReference type="GO" id="GO:0006782">
    <property type="term" value="P:protoporphyrinogen IX biosynthetic process"/>
    <property type="evidence" value="ECO:0007669"/>
    <property type="project" value="UniProtKB-UniRule"/>
</dbReference>
<dbReference type="CDD" id="cd00610">
    <property type="entry name" value="OAT_like"/>
    <property type="match status" value="1"/>
</dbReference>
<dbReference type="FunFam" id="3.40.640.10:FF:000021">
    <property type="entry name" value="Glutamate-1-semialdehyde 2,1-aminomutase"/>
    <property type="match status" value="1"/>
</dbReference>
<dbReference type="Gene3D" id="3.90.1150.10">
    <property type="entry name" value="Aspartate Aminotransferase, domain 1"/>
    <property type="match status" value="1"/>
</dbReference>
<dbReference type="Gene3D" id="3.40.640.10">
    <property type="entry name" value="Type I PLP-dependent aspartate aminotransferase-like (Major domain)"/>
    <property type="match status" value="1"/>
</dbReference>
<dbReference type="HAMAP" id="MF_00375">
    <property type="entry name" value="HemL_aminotrans_3"/>
    <property type="match status" value="1"/>
</dbReference>
<dbReference type="InterPro" id="IPR004639">
    <property type="entry name" value="4pyrrol_synth_GluAld_NH2Trfase"/>
</dbReference>
<dbReference type="InterPro" id="IPR005814">
    <property type="entry name" value="Aminotrans_3"/>
</dbReference>
<dbReference type="InterPro" id="IPR049704">
    <property type="entry name" value="Aminotrans_3_PPA_site"/>
</dbReference>
<dbReference type="InterPro" id="IPR015424">
    <property type="entry name" value="PyrdxlP-dep_Trfase"/>
</dbReference>
<dbReference type="InterPro" id="IPR015421">
    <property type="entry name" value="PyrdxlP-dep_Trfase_major"/>
</dbReference>
<dbReference type="InterPro" id="IPR015422">
    <property type="entry name" value="PyrdxlP-dep_Trfase_small"/>
</dbReference>
<dbReference type="NCBIfam" id="TIGR00713">
    <property type="entry name" value="hemL"/>
    <property type="match status" value="1"/>
</dbReference>
<dbReference type="NCBIfam" id="NF000818">
    <property type="entry name" value="PRK00062.1"/>
    <property type="match status" value="1"/>
</dbReference>
<dbReference type="NCBIfam" id="NF009055">
    <property type="entry name" value="PRK12389.1"/>
    <property type="match status" value="1"/>
</dbReference>
<dbReference type="PANTHER" id="PTHR43713">
    <property type="entry name" value="GLUTAMATE-1-SEMIALDEHYDE 2,1-AMINOMUTASE"/>
    <property type="match status" value="1"/>
</dbReference>
<dbReference type="PANTHER" id="PTHR43713:SF1">
    <property type="entry name" value="GLUTAMATE-1-SEMIALDEHYDE 2,1-AMINOMUTASE 2"/>
    <property type="match status" value="1"/>
</dbReference>
<dbReference type="Pfam" id="PF00202">
    <property type="entry name" value="Aminotran_3"/>
    <property type="match status" value="1"/>
</dbReference>
<dbReference type="SUPFAM" id="SSF53383">
    <property type="entry name" value="PLP-dependent transferases"/>
    <property type="match status" value="1"/>
</dbReference>
<dbReference type="PROSITE" id="PS00600">
    <property type="entry name" value="AA_TRANSFER_CLASS_3"/>
    <property type="match status" value="1"/>
</dbReference>
<comment type="catalytic activity">
    <reaction evidence="1">
        <text>(S)-4-amino-5-oxopentanoate = 5-aminolevulinate</text>
        <dbReference type="Rhea" id="RHEA:14265"/>
        <dbReference type="ChEBI" id="CHEBI:57501"/>
        <dbReference type="ChEBI" id="CHEBI:356416"/>
        <dbReference type="EC" id="5.4.3.8"/>
    </reaction>
</comment>
<comment type="cofactor">
    <cofactor evidence="1">
        <name>pyridoxal 5'-phosphate</name>
        <dbReference type="ChEBI" id="CHEBI:597326"/>
    </cofactor>
</comment>
<comment type="pathway">
    <text evidence="1">Porphyrin-containing compound metabolism; protoporphyrin-IX biosynthesis; 5-aminolevulinate from L-glutamyl-tRNA(Glu): step 2/2.</text>
</comment>
<comment type="subunit">
    <text evidence="1">Homodimer.</text>
</comment>
<comment type="subcellular location">
    <subcellularLocation>
        <location evidence="1">Cytoplasm</location>
    </subcellularLocation>
</comment>
<comment type="similarity">
    <text evidence="1">Belongs to the class-III pyridoxal-phosphate-dependent aminotransferase family. HemL subfamily.</text>
</comment>
<name>GSA1_BACAN</name>
<evidence type="ECO:0000255" key="1">
    <source>
        <dbReference type="HAMAP-Rule" id="MF_00375"/>
    </source>
</evidence>
<evidence type="ECO:0007829" key="2">
    <source>
        <dbReference type="PDB" id="3L44"/>
    </source>
</evidence>
<sequence length="434" mass="46432">MVVKFTKSEALHKEALEHIVGGVNSPSRSFKAVGGGAPIAMERGKGAYFWDVDGNKYIDYLAAYGPIITGHAHPHITKAITTAAENGVLYGTPTALEVKFAKMLKEAMPALDKVRFVNSGTEAVMTTIRVARAYTGRTKIMKFAGCYHGHSDLVLVAAGSGPSTLGTPDSAGVPQSIAQEVITVPFNNVETLKEALDKWGHEVAAILVEPIVGNFGIVEPKPGFLEKVNELVHEAGALVIYDEVITAFRFMYGGAQDLLGVTPDLTALGKVIGGGLPIGAYGGKKEIMEQVAPLGPAYQAGTMAGNPASMASGIACLEVLQQEGLYEKLDELGAMLEKGILEQAAKHNIDITLNRLKGALTVYFTTNTIEDYDAAQDTDGEMFGKFFKLMLQEGVNLAPSKYEAWFLTTEHTKEDIEYTIEAVGRAFAALADNK</sequence>